<dbReference type="EMBL" id="CP001186">
    <property type="protein sequence ID" value="ACK98390.1"/>
    <property type="molecule type" value="Genomic_DNA"/>
</dbReference>
<dbReference type="RefSeq" id="WP_000268512.1">
    <property type="nucleotide sequence ID" value="NC_011772.1"/>
</dbReference>
<dbReference type="SMR" id="B7IW08"/>
<dbReference type="KEGG" id="bcg:BCG9842_B4804"/>
<dbReference type="HOGENOM" id="CLU_066607_4_0_9"/>
<dbReference type="Proteomes" id="UP000006744">
    <property type="component" value="Chromosome"/>
</dbReference>
<dbReference type="GO" id="GO:0005737">
    <property type="term" value="C:cytoplasm"/>
    <property type="evidence" value="ECO:0007669"/>
    <property type="project" value="UniProtKB-SubCell"/>
</dbReference>
<dbReference type="GO" id="GO:0006282">
    <property type="term" value="P:regulation of DNA repair"/>
    <property type="evidence" value="ECO:0007669"/>
    <property type="project" value="UniProtKB-UniRule"/>
</dbReference>
<dbReference type="Gene3D" id="1.10.10.10">
    <property type="entry name" value="Winged helix-like DNA-binding domain superfamily/Winged helix DNA-binding domain"/>
    <property type="match status" value="4"/>
</dbReference>
<dbReference type="HAMAP" id="MF_01114">
    <property type="entry name" value="RecX"/>
    <property type="match status" value="1"/>
</dbReference>
<dbReference type="InterPro" id="IPR053926">
    <property type="entry name" value="RecX_HTH_1st"/>
</dbReference>
<dbReference type="InterPro" id="IPR053924">
    <property type="entry name" value="RecX_HTH_2nd"/>
</dbReference>
<dbReference type="InterPro" id="IPR053925">
    <property type="entry name" value="RecX_HTH_3rd"/>
</dbReference>
<dbReference type="InterPro" id="IPR003783">
    <property type="entry name" value="Regulatory_RecX"/>
</dbReference>
<dbReference type="InterPro" id="IPR036388">
    <property type="entry name" value="WH-like_DNA-bd_sf"/>
</dbReference>
<dbReference type="NCBIfam" id="NF010733">
    <property type="entry name" value="PRK14135.1"/>
    <property type="match status" value="1"/>
</dbReference>
<dbReference type="PANTHER" id="PTHR33602">
    <property type="entry name" value="REGULATORY PROTEIN RECX FAMILY PROTEIN"/>
    <property type="match status" value="1"/>
</dbReference>
<dbReference type="PANTHER" id="PTHR33602:SF1">
    <property type="entry name" value="REGULATORY PROTEIN RECX FAMILY PROTEIN"/>
    <property type="match status" value="1"/>
</dbReference>
<dbReference type="Pfam" id="PF21982">
    <property type="entry name" value="RecX_HTH1"/>
    <property type="match status" value="1"/>
</dbReference>
<dbReference type="Pfam" id="PF02631">
    <property type="entry name" value="RecX_HTH2"/>
    <property type="match status" value="1"/>
</dbReference>
<dbReference type="Pfam" id="PF21981">
    <property type="entry name" value="RecX_HTH3"/>
    <property type="match status" value="2"/>
</dbReference>
<gene>
    <name evidence="1" type="primary">recX</name>
    <name type="ordered locus">BCG9842_B4804</name>
</gene>
<feature type="chain" id="PRO_1000137152" description="Regulatory protein RecX">
    <location>
        <begin position="1"/>
        <end position="270"/>
    </location>
</feature>
<accession>B7IW08</accession>
<name>RECX_BACC2</name>
<organism>
    <name type="scientific">Bacillus cereus (strain G9842)</name>
    <dbReference type="NCBI Taxonomy" id="405531"/>
    <lineage>
        <taxon>Bacteria</taxon>
        <taxon>Bacillati</taxon>
        <taxon>Bacillota</taxon>
        <taxon>Bacilli</taxon>
        <taxon>Bacillales</taxon>
        <taxon>Bacillaceae</taxon>
        <taxon>Bacillus</taxon>
        <taxon>Bacillus cereus group</taxon>
    </lineage>
</organism>
<protein>
    <recommendedName>
        <fullName evidence="1">Regulatory protein RecX</fullName>
    </recommendedName>
</protein>
<sequence>MAVITKIEVQKRSKERFNIYIDKGQGEEYGFSVDQVILMKHGLQKGLEIDEIELGNILYNEEVQKAYLQAISYLSYQMRTKQEIEDFLRKKEVGQAIISEVVSKLLHDRYINDKEYAVLYTRTQSNVNRKGPTVIKRELLNKGVQDLIIMHSLQEYPKEKQIENALFLIEKKKKSYQKHSFLQMKLKLDEMLVRKGYSREVIQICLEELKDERDDEKQQEALHYHGNKYYEKYKKYDGWTFENKMKQALYRKGFSIDEIEIFLQMKREEG</sequence>
<keyword id="KW-0963">Cytoplasm</keyword>
<reference key="1">
    <citation type="submission" date="2008-10" db="EMBL/GenBank/DDBJ databases">
        <title>Genome sequence of Bacillus cereus G9842.</title>
        <authorList>
            <person name="Dodson R.J."/>
            <person name="Durkin A.S."/>
            <person name="Rosovitz M.J."/>
            <person name="Rasko D.A."/>
            <person name="Hoffmaster A."/>
            <person name="Ravel J."/>
            <person name="Sutton G."/>
        </authorList>
    </citation>
    <scope>NUCLEOTIDE SEQUENCE [LARGE SCALE GENOMIC DNA]</scope>
    <source>
        <strain>G9842</strain>
    </source>
</reference>
<proteinExistence type="inferred from homology"/>
<comment type="function">
    <text evidence="1">Modulates RecA activity.</text>
</comment>
<comment type="subcellular location">
    <subcellularLocation>
        <location evidence="1">Cytoplasm</location>
    </subcellularLocation>
</comment>
<comment type="similarity">
    <text evidence="1">Belongs to the RecX family.</text>
</comment>
<evidence type="ECO:0000255" key="1">
    <source>
        <dbReference type="HAMAP-Rule" id="MF_01114"/>
    </source>
</evidence>